<feature type="chain" id="PRO_1000056290" description="Ubiquinone/menaquinone biosynthesis C-methyltransferase UbiE">
    <location>
        <begin position="1"/>
        <end position="251"/>
    </location>
</feature>
<feature type="binding site" evidence="1">
    <location>
        <position position="74"/>
    </location>
    <ligand>
        <name>S-adenosyl-L-methionine</name>
        <dbReference type="ChEBI" id="CHEBI:59789"/>
    </ligand>
</feature>
<feature type="binding site" evidence="1">
    <location>
        <position position="95"/>
    </location>
    <ligand>
        <name>S-adenosyl-L-methionine</name>
        <dbReference type="ChEBI" id="CHEBI:59789"/>
    </ligand>
</feature>
<feature type="binding site" evidence="1">
    <location>
        <begin position="123"/>
        <end position="124"/>
    </location>
    <ligand>
        <name>S-adenosyl-L-methionine</name>
        <dbReference type="ChEBI" id="CHEBI:59789"/>
    </ligand>
</feature>
<feature type="binding site" evidence="1">
    <location>
        <position position="140"/>
    </location>
    <ligand>
        <name>S-adenosyl-L-methionine</name>
        <dbReference type="ChEBI" id="CHEBI:59789"/>
    </ligand>
</feature>
<gene>
    <name evidence="1" type="primary">ubiE</name>
    <name type="ordered locus">SCH_3868</name>
</gene>
<proteinExistence type="inferred from homology"/>
<reference key="1">
    <citation type="journal article" date="2005" name="Nucleic Acids Res.">
        <title>The genome sequence of Salmonella enterica serovar Choleraesuis, a highly invasive and resistant zoonotic pathogen.</title>
        <authorList>
            <person name="Chiu C.-H."/>
            <person name="Tang P."/>
            <person name="Chu C."/>
            <person name="Hu S."/>
            <person name="Bao Q."/>
            <person name="Yu J."/>
            <person name="Chou Y.-Y."/>
            <person name="Wang H.-S."/>
            <person name="Lee Y.-S."/>
        </authorList>
    </citation>
    <scope>NUCLEOTIDE SEQUENCE [LARGE SCALE GENOMIC DNA]</scope>
    <source>
        <strain>SC-B67</strain>
    </source>
</reference>
<name>UBIE_SALCH</name>
<accession>Q57HN8</accession>
<comment type="function">
    <text evidence="1">Methyltransferase required for the conversion of demethylmenaquinol (DMKH2) to menaquinol (MKH2) and the conversion of 2-polyprenyl-6-methoxy-1,4-benzoquinol (DDMQH2) to 2-polyprenyl-3-methyl-6-methoxy-1,4-benzoquinol (DMQH2).</text>
</comment>
<comment type="catalytic activity">
    <reaction evidence="1">
        <text>a 2-demethylmenaquinol + S-adenosyl-L-methionine = a menaquinol + S-adenosyl-L-homocysteine + H(+)</text>
        <dbReference type="Rhea" id="RHEA:42640"/>
        <dbReference type="Rhea" id="RHEA-COMP:9539"/>
        <dbReference type="Rhea" id="RHEA-COMP:9563"/>
        <dbReference type="ChEBI" id="CHEBI:15378"/>
        <dbReference type="ChEBI" id="CHEBI:18151"/>
        <dbReference type="ChEBI" id="CHEBI:55437"/>
        <dbReference type="ChEBI" id="CHEBI:57856"/>
        <dbReference type="ChEBI" id="CHEBI:59789"/>
        <dbReference type="EC" id="2.1.1.163"/>
    </reaction>
</comment>
<comment type="catalytic activity">
    <reaction evidence="1">
        <text>a 2-methoxy-6-(all-trans-polyprenyl)benzene-1,4-diol + S-adenosyl-L-methionine = a 5-methoxy-2-methyl-3-(all-trans-polyprenyl)benzene-1,4-diol + S-adenosyl-L-homocysteine + H(+)</text>
        <dbReference type="Rhea" id="RHEA:28286"/>
        <dbReference type="Rhea" id="RHEA-COMP:10858"/>
        <dbReference type="Rhea" id="RHEA-COMP:10859"/>
        <dbReference type="ChEBI" id="CHEBI:15378"/>
        <dbReference type="ChEBI" id="CHEBI:57856"/>
        <dbReference type="ChEBI" id="CHEBI:59789"/>
        <dbReference type="ChEBI" id="CHEBI:84166"/>
        <dbReference type="ChEBI" id="CHEBI:84167"/>
        <dbReference type="EC" id="2.1.1.201"/>
    </reaction>
</comment>
<comment type="pathway">
    <text evidence="1">Quinol/quinone metabolism; menaquinone biosynthesis; menaquinol from 1,4-dihydroxy-2-naphthoate: step 2/2.</text>
</comment>
<comment type="pathway">
    <text evidence="1">Cofactor biosynthesis; ubiquinone biosynthesis.</text>
</comment>
<comment type="similarity">
    <text evidence="1">Belongs to the class I-like SAM-binding methyltransferase superfamily. MenG/UbiE family.</text>
</comment>
<keyword id="KW-0474">Menaquinone biosynthesis</keyword>
<keyword id="KW-0489">Methyltransferase</keyword>
<keyword id="KW-0949">S-adenosyl-L-methionine</keyword>
<keyword id="KW-0808">Transferase</keyword>
<keyword id="KW-0831">Ubiquinone biosynthesis</keyword>
<evidence type="ECO:0000255" key="1">
    <source>
        <dbReference type="HAMAP-Rule" id="MF_01813"/>
    </source>
</evidence>
<protein>
    <recommendedName>
        <fullName evidence="1">Ubiquinone/menaquinone biosynthesis C-methyltransferase UbiE</fullName>
        <ecNumber evidence="1">2.1.1.163</ecNumber>
        <ecNumber evidence="1">2.1.1.201</ecNumber>
    </recommendedName>
    <alternativeName>
        <fullName evidence="1">2-methoxy-6-polyprenyl-1,4-benzoquinol methylase</fullName>
    </alternativeName>
    <alternativeName>
        <fullName evidence="1">Demethylmenaquinone methyltransferase</fullName>
    </alternativeName>
</protein>
<organism>
    <name type="scientific">Salmonella choleraesuis (strain SC-B67)</name>
    <dbReference type="NCBI Taxonomy" id="321314"/>
    <lineage>
        <taxon>Bacteria</taxon>
        <taxon>Pseudomonadati</taxon>
        <taxon>Pseudomonadota</taxon>
        <taxon>Gammaproteobacteria</taxon>
        <taxon>Enterobacterales</taxon>
        <taxon>Enterobacteriaceae</taxon>
        <taxon>Salmonella</taxon>
    </lineage>
</organism>
<sequence>MVEDSQETTHFGFQTVAKEQKADMVAHVFHSVASKYDVMNDLMSFGIHRLWKRFTIDCSGVRRGQTVLDLAGGTGDLTAKFSRMVGETGKVILADINDSMLKMGREKLRNIGVIGNVEYVQANAEALPFPDNTFDCITISFGLRNVTEKEKALRSMFRVLKPGGRLLVLEFSKPIIEPLSKAYDAYSFHILPRIGSMVANDADSYRYLAESIRMHPDQDTLKAMMQDAGFESVDYYNLTAGVVALHRGYKF</sequence>
<dbReference type="EC" id="2.1.1.163" evidence="1"/>
<dbReference type="EC" id="2.1.1.201" evidence="1"/>
<dbReference type="EMBL" id="AE017220">
    <property type="protein sequence ID" value="AAX67774.1"/>
    <property type="molecule type" value="Genomic_DNA"/>
</dbReference>
<dbReference type="RefSeq" id="WP_000229009.1">
    <property type="nucleotide sequence ID" value="NC_006905.1"/>
</dbReference>
<dbReference type="SMR" id="Q57HN8"/>
<dbReference type="KEGG" id="sec:SCH_3868"/>
<dbReference type="HOGENOM" id="CLU_037990_0_0_6"/>
<dbReference type="UniPathway" id="UPA00079">
    <property type="reaction ID" value="UER00169"/>
</dbReference>
<dbReference type="UniPathway" id="UPA00232"/>
<dbReference type="Proteomes" id="UP000000538">
    <property type="component" value="Chromosome"/>
</dbReference>
<dbReference type="GO" id="GO:0008425">
    <property type="term" value="F:2-methoxy-6-polyprenyl-1,4-benzoquinol methyltransferase activity"/>
    <property type="evidence" value="ECO:0007669"/>
    <property type="project" value="UniProtKB-UniRule"/>
</dbReference>
<dbReference type="GO" id="GO:0043770">
    <property type="term" value="F:demethylmenaquinone methyltransferase activity"/>
    <property type="evidence" value="ECO:0007669"/>
    <property type="project" value="UniProtKB-UniRule"/>
</dbReference>
<dbReference type="GO" id="GO:0009060">
    <property type="term" value="P:aerobic respiration"/>
    <property type="evidence" value="ECO:0007669"/>
    <property type="project" value="UniProtKB-UniRule"/>
</dbReference>
<dbReference type="GO" id="GO:0009234">
    <property type="term" value="P:menaquinone biosynthetic process"/>
    <property type="evidence" value="ECO:0007669"/>
    <property type="project" value="UniProtKB-UniRule"/>
</dbReference>
<dbReference type="GO" id="GO:0032259">
    <property type="term" value="P:methylation"/>
    <property type="evidence" value="ECO:0007669"/>
    <property type="project" value="UniProtKB-KW"/>
</dbReference>
<dbReference type="CDD" id="cd02440">
    <property type="entry name" value="AdoMet_MTases"/>
    <property type="match status" value="1"/>
</dbReference>
<dbReference type="FunFam" id="3.40.50.150:FF:000014">
    <property type="entry name" value="Ubiquinone/menaquinone biosynthesis C-methyltransferase UbiE"/>
    <property type="match status" value="1"/>
</dbReference>
<dbReference type="Gene3D" id="3.40.50.150">
    <property type="entry name" value="Vaccinia Virus protein VP39"/>
    <property type="match status" value="1"/>
</dbReference>
<dbReference type="HAMAP" id="MF_01813">
    <property type="entry name" value="MenG_UbiE_methyltr"/>
    <property type="match status" value="1"/>
</dbReference>
<dbReference type="InterPro" id="IPR029063">
    <property type="entry name" value="SAM-dependent_MTases_sf"/>
</dbReference>
<dbReference type="InterPro" id="IPR004033">
    <property type="entry name" value="UbiE/COQ5_MeTrFase"/>
</dbReference>
<dbReference type="InterPro" id="IPR023576">
    <property type="entry name" value="UbiE/COQ5_MeTrFase_CS"/>
</dbReference>
<dbReference type="NCBIfam" id="TIGR01934">
    <property type="entry name" value="MenG_MenH_UbiE"/>
    <property type="match status" value="1"/>
</dbReference>
<dbReference type="NCBIfam" id="NF001240">
    <property type="entry name" value="PRK00216.1-1"/>
    <property type="match status" value="1"/>
</dbReference>
<dbReference type="NCBIfam" id="NF001242">
    <property type="entry name" value="PRK00216.1-3"/>
    <property type="match status" value="1"/>
</dbReference>
<dbReference type="NCBIfam" id="NF001244">
    <property type="entry name" value="PRK00216.1-5"/>
    <property type="match status" value="1"/>
</dbReference>
<dbReference type="PANTHER" id="PTHR43591:SF24">
    <property type="entry name" value="2-METHOXY-6-POLYPRENYL-1,4-BENZOQUINOL METHYLASE, MITOCHONDRIAL"/>
    <property type="match status" value="1"/>
</dbReference>
<dbReference type="PANTHER" id="PTHR43591">
    <property type="entry name" value="METHYLTRANSFERASE"/>
    <property type="match status" value="1"/>
</dbReference>
<dbReference type="Pfam" id="PF01209">
    <property type="entry name" value="Ubie_methyltran"/>
    <property type="match status" value="1"/>
</dbReference>
<dbReference type="SUPFAM" id="SSF53335">
    <property type="entry name" value="S-adenosyl-L-methionine-dependent methyltransferases"/>
    <property type="match status" value="1"/>
</dbReference>
<dbReference type="PROSITE" id="PS51608">
    <property type="entry name" value="SAM_MT_UBIE"/>
    <property type="match status" value="1"/>
</dbReference>
<dbReference type="PROSITE" id="PS01183">
    <property type="entry name" value="UBIE_1"/>
    <property type="match status" value="1"/>
</dbReference>
<dbReference type="PROSITE" id="PS01184">
    <property type="entry name" value="UBIE_2"/>
    <property type="match status" value="1"/>
</dbReference>